<proteinExistence type="evidence at protein level"/>
<dbReference type="EMBL" id="CU329670">
    <property type="protein sequence ID" value="CAB16599.2"/>
    <property type="molecule type" value="Genomic_DNA"/>
</dbReference>
<dbReference type="PIR" id="T38754">
    <property type="entry name" value="T38754"/>
</dbReference>
<dbReference type="BioGRID" id="280055">
    <property type="interactions" value="39"/>
</dbReference>
<dbReference type="iPTMnet" id="Q6LA54"/>
<dbReference type="PaxDb" id="4896-SPAC3H5.08c.1"/>
<dbReference type="EnsemblFungi" id="SPAC3H5.08c.1">
    <property type="protein sequence ID" value="SPAC3H5.08c.1:pep"/>
    <property type="gene ID" value="SPAC3H5.08c"/>
</dbReference>
<dbReference type="KEGG" id="spo:2543641"/>
<dbReference type="PomBase" id="SPAC3H5.08c"/>
<dbReference type="VEuPathDB" id="FungiDB:SPAC3H5.08c"/>
<dbReference type="eggNOG" id="KOG0283">
    <property type="taxonomic scope" value="Eukaryota"/>
</dbReference>
<dbReference type="HOGENOM" id="CLU_004759_2_0_1"/>
<dbReference type="InParanoid" id="Q6LA54"/>
<dbReference type="OMA" id="DCLCCFE"/>
<dbReference type="PRO" id="PR:Q6LA54"/>
<dbReference type="Proteomes" id="UP000002485">
    <property type="component" value="Chromosome I"/>
</dbReference>
<dbReference type="GO" id="GO:0005789">
    <property type="term" value="C:endoplasmic reticulum membrane"/>
    <property type="evidence" value="ECO:0007005"/>
    <property type="project" value="PomBase"/>
</dbReference>
<dbReference type="GO" id="GO:0044732">
    <property type="term" value="C:mitotic spindle pole body"/>
    <property type="evidence" value="ECO:0007005"/>
    <property type="project" value="PomBase"/>
</dbReference>
<dbReference type="GO" id="GO:0005634">
    <property type="term" value="C:nucleus"/>
    <property type="evidence" value="ECO:0007005"/>
    <property type="project" value="PomBase"/>
</dbReference>
<dbReference type="GO" id="GO:0006887">
    <property type="term" value="P:exocytosis"/>
    <property type="evidence" value="ECO:0000304"/>
    <property type="project" value="PomBase"/>
</dbReference>
<dbReference type="Gene3D" id="2.130.10.10">
    <property type="entry name" value="YVTN repeat-like/Quinoprotein amine dehydrogenase"/>
    <property type="match status" value="1"/>
</dbReference>
<dbReference type="InterPro" id="IPR015943">
    <property type="entry name" value="WD40/YVTN_repeat-like_dom_sf"/>
</dbReference>
<dbReference type="InterPro" id="IPR036322">
    <property type="entry name" value="WD40_repeat_dom_sf"/>
</dbReference>
<dbReference type="InterPro" id="IPR001680">
    <property type="entry name" value="WD40_rpt"/>
</dbReference>
<dbReference type="InterPro" id="IPR040324">
    <property type="entry name" value="WDR44/Dgr2"/>
</dbReference>
<dbReference type="PANTHER" id="PTHR14221">
    <property type="entry name" value="WD REPEAT DOMAIN 44"/>
    <property type="match status" value="1"/>
</dbReference>
<dbReference type="PANTHER" id="PTHR14221:SF0">
    <property type="entry name" value="WD REPEAT-CONTAINING PROTEIN 44"/>
    <property type="match status" value="1"/>
</dbReference>
<dbReference type="Pfam" id="PF00400">
    <property type="entry name" value="WD40"/>
    <property type="match status" value="4"/>
</dbReference>
<dbReference type="SMART" id="SM00320">
    <property type="entry name" value="WD40"/>
    <property type="match status" value="6"/>
</dbReference>
<dbReference type="SUPFAM" id="SSF50978">
    <property type="entry name" value="WD40 repeat-like"/>
    <property type="match status" value="1"/>
</dbReference>
<dbReference type="PROSITE" id="PS50082">
    <property type="entry name" value="WD_REPEATS_2"/>
    <property type="match status" value="4"/>
</dbReference>
<dbReference type="PROSITE" id="PS50294">
    <property type="entry name" value="WD_REPEATS_REGION"/>
    <property type="match status" value="2"/>
</dbReference>
<organism>
    <name type="scientific">Schizosaccharomyces pombe (strain 972 / ATCC 24843)</name>
    <name type="common">Fission yeast</name>
    <dbReference type="NCBI Taxonomy" id="284812"/>
    <lineage>
        <taxon>Eukaryota</taxon>
        <taxon>Fungi</taxon>
        <taxon>Dikarya</taxon>
        <taxon>Ascomycota</taxon>
        <taxon>Taphrinomycotina</taxon>
        <taxon>Schizosaccharomycetes</taxon>
        <taxon>Schizosaccharomycetales</taxon>
        <taxon>Schizosaccharomycetaceae</taxon>
        <taxon>Schizosaccharomyces</taxon>
    </lineage>
</organism>
<evidence type="ECO:0000256" key="1">
    <source>
        <dbReference type="SAM" id="MobiDB-lite"/>
    </source>
</evidence>
<evidence type="ECO:0000269" key="2">
    <source>
    </source>
</evidence>
<evidence type="ECO:0000269" key="3">
    <source>
    </source>
</evidence>
<feature type="chain" id="PRO_0000316557" description="Uncharacterized WD repeat-containing protein C3H5.08c">
    <location>
        <begin position="1"/>
        <end position="933"/>
    </location>
</feature>
<feature type="repeat" description="WD 1">
    <location>
        <begin position="314"/>
        <end position="353"/>
    </location>
</feature>
<feature type="repeat" description="WD 2">
    <location>
        <begin position="385"/>
        <end position="423"/>
    </location>
</feature>
<feature type="repeat" description="WD 3">
    <location>
        <begin position="425"/>
        <end position="465"/>
    </location>
</feature>
<feature type="repeat" description="WD 4">
    <location>
        <begin position="467"/>
        <end position="506"/>
    </location>
</feature>
<feature type="repeat" description="WD 5">
    <location>
        <begin position="517"/>
        <end position="563"/>
    </location>
</feature>
<feature type="repeat" description="WD 6">
    <location>
        <begin position="568"/>
        <end position="607"/>
    </location>
</feature>
<feature type="repeat" description="WD 7">
    <location>
        <begin position="617"/>
        <end position="657"/>
    </location>
</feature>
<feature type="repeat" description="WD 8">
    <location>
        <begin position="665"/>
        <end position="710"/>
    </location>
</feature>
<feature type="region of interest" description="Disordered" evidence="1">
    <location>
        <begin position="1"/>
        <end position="135"/>
    </location>
</feature>
<feature type="region of interest" description="Disordered" evidence="1">
    <location>
        <begin position="173"/>
        <end position="194"/>
    </location>
</feature>
<feature type="region of interest" description="Disordered" evidence="1">
    <location>
        <begin position="252"/>
        <end position="275"/>
    </location>
</feature>
<feature type="region of interest" description="Disordered" evidence="1">
    <location>
        <begin position="756"/>
        <end position="796"/>
    </location>
</feature>
<feature type="compositionally biased region" description="Polar residues" evidence="1">
    <location>
        <begin position="1"/>
        <end position="28"/>
    </location>
</feature>
<feature type="compositionally biased region" description="Basic and acidic residues" evidence="1">
    <location>
        <begin position="29"/>
        <end position="47"/>
    </location>
</feature>
<feature type="compositionally biased region" description="Low complexity" evidence="1">
    <location>
        <begin position="49"/>
        <end position="59"/>
    </location>
</feature>
<feature type="compositionally biased region" description="Polar residues" evidence="1">
    <location>
        <begin position="87"/>
        <end position="101"/>
    </location>
</feature>
<feature type="compositionally biased region" description="Polar residues" evidence="1">
    <location>
        <begin position="108"/>
        <end position="135"/>
    </location>
</feature>
<feature type="compositionally biased region" description="Acidic residues" evidence="1">
    <location>
        <begin position="173"/>
        <end position="182"/>
    </location>
</feature>
<feature type="compositionally biased region" description="Polar residues" evidence="1">
    <location>
        <begin position="264"/>
        <end position="275"/>
    </location>
</feature>
<feature type="compositionally biased region" description="Polar residues" evidence="1">
    <location>
        <begin position="757"/>
        <end position="768"/>
    </location>
</feature>
<feature type="compositionally biased region" description="Basic and acidic residues" evidence="1">
    <location>
        <begin position="769"/>
        <end position="783"/>
    </location>
</feature>
<feature type="modified residue" description="Phosphoserine" evidence="3">
    <location>
        <position position="722"/>
    </location>
</feature>
<comment type="subcellular location">
    <subcellularLocation>
        <location evidence="2">Endoplasmic reticulum</location>
    </subcellularLocation>
    <subcellularLocation>
        <location evidence="2">Nucleus</location>
    </subcellularLocation>
</comment>
<reference key="1">
    <citation type="journal article" date="2002" name="Nature">
        <title>The genome sequence of Schizosaccharomyces pombe.</title>
        <authorList>
            <person name="Wood V."/>
            <person name="Gwilliam R."/>
            <person name="Rajandream M.A."/>
            <person name="Lyne M.H."/>
            <person name="Lyne R."/>
            <person name="Stewart A."/>
            <person name="Sgouros J.G."/>
            <person name="Peat N."/>
            <person name="Hayles J."/>
            <person name="Baker S.G."/>
            <person name="Basham D."/>
            <person name="Bowman S."/>
            <person name="Brooks K."/>
            <person name="Brown D."/>
            <person name="Brown S."/>
            <person name="Chillingworth T."/>
            <person name="Churcher C.M."/>
            <person name="Collins M."/>
            <person name="Connor R."/>
            <person name="Cronin A."/>
            <person name="Davis P."/>
            <person name="Feltwell T."/>
            <person name="Fraser A."/>
            <person name="Gentles S."/>
            <person name="Goble A."/>
            <person name="Hamlin N."/>
            <person name="Harris D.E."/>
            <person name="Hidalgo J."/>
            <person name="Hodgson G."/>
            <person name="Holroyd S."/>
            <person name="Hornsby T."/>
            <person name="Howarth S."/>
            <person name="Huckle E.J."/>
            <person name="Hunt S."/>
            <person name="Jagels K."/>
            <person name="James K.D."/>
            <person name="Jones L."/>
            <person name="Jones M."/>
            <person name="Leather S."/>
            <person name="McDonald S."/>
            <person name="McLean J."/>
            <person name="Mooney P."/>
            <person name="Moule S."/>
            <person name="Mungall K.L."/>
            <person name="Murphy L.D."/>
            <person name="Niblett D."/>
            <person name="Odell C."/>
            <person name="Oliver K."/>
            <person name="O'Neil S."/>
            <person name="Pearson D."/>
            <person name="Quail M.A."/>
            <person name="Rabbinowitsch E."/>
            <person name="Rutherford K.M."/>
            <person name="Rutter S."/>
            <person name="Saunders D."/>
            <person name="Seeger K."/>
            <person name="Sharp S."/>
            <person name="Skelton J."/>
            <person name="Simmonds M.N."/>
            <person name="Squares R."/>
            <person name="Squares S."/>
            <person name="Stevens K."/>
            <person name="Taylor K."/>
            <person name="Taylor R.G."/>
            <person name="Tivey A."/>
            <person name="Walsh S.V."/>
            <person name="Warren T."/>
            <person name="Whitehead S."/>
            <person name="Woodward J.R."/>
            <person name="Volckaert G."/>
            <person name="Aert R."/>
            <person name="Robben J."/>
            <person name="Grymonprez B."/>
            <person name="Weltjens I."/>
            <person name="Vanstreels E."/>
            <person name="Rieger M."/>
            <person name="Schaefer M."/>
            <person name="Mueller-Auer S."/>
            <person name="Gabel C."/>
            <person name="Fuchs M."/>
            <person name="Duesterhoeft A."/>
            <person name="Fritzc C."/>
            <person name="Holzer E."/>
            <person name="Moestl D."/>
            <person name="Hilbert H."/>
            <person name="Borzym K."/>
            <person name="Langer I."/>
            <person name="Beck A."/>
            <person name="Lehrach H."/>
            <person name="Reinhardt R."/>
            <person name="Pohl T.M."/>
            <person name="Eger P."/>
            <person name="Zimmermann W."/>
            <person name="Wedler H."/>
            <person name="Wambutt R."/>
            <person name="Purnelle B."/>
            <person name="Goffeau A."/>
            <person name="Cadieu E."/>
            <person name="Dreano S."/>
            <person name="Gloux S."/>
            <person name="Lelaure V."/>
            <person name="Mottier S."/>
            <person name="Galibert F."/>
            <person name="Aves S.J."/>
            <person name="Xiang Z."/>
            <person name="Hunt C."/>
            <person name="Moore K."/>
            <person name="Hurst S.M."/>
            <person name="Lucas M."/>
            <person name="Rochet M."/>
            <person name="Gaillardin C."/>
            <person name="Tallada V.A."/>
            <person name="Garzon A."/>
            <person name="Thode G."/>
            <person name="Daga R.R."/>
            <person name="Cruzado L."/>
            <person name="Jimenez J."/>
            <person name="Sanchez M."/>
            <person name="del Rey F."/>
            <person name="Benito J."/>
            <person name="Dominguez A."/>
            <person name="Revuelta J.L."/>
            <person name="Moreno S."/>
            <person name="Armstrong J."/>
            <person name="Forsburg S.L."/>
            <person name="Cerutti L."/>
            <person name="Lowe T."/>
            <person name="McCombie W.R."/>
            <person name="Paulsen I."/>
            <person name="Potashkin J."/>
            <person name="Shpakovski G.V."/>
            <person name="Ussery D."/>
            <person name="Barrell B.G."/>
            <person name="Nurse P."/>
        </authorList>
    </citation>
    <scope>NUCLEOTIDE SEQUENCE [LARGE SCALE GENOMIC DNA]</scope>
    <source>
        <strain>972 / ATCC 24843</strain>
    </source>
</reference>
<reference key="2">
    <citation type="journal article" date="2011" name="Science">
        <title>Comparative functional genomics of the fission yeasts.</title>
        <authorList>
            <person name="Rhind N."/>
            <person name="Chen Z."/>
            <person name="Yassour M."/>
            <person name="Thompson D.A."/>
            <person name="Haas B.J."/>
            <person name="Habib N."/>
            <person name="Wapinski I."/>
            <person name="Roy S."/>
            <person name="Lin M.F."/>
            <person name="Heiman D.I."/>
            <person name="Young S.K."/>
            <person name="Furuya K."/>
            <person name="Guo Y."/>
            <person name="Pidoux A."/>
            <person name="Chen H.M."/>
            <person name="Robbertse B."/>
            <person name="Goldberg J.M."/>
            <person name="Aoki K."/>
            <person name="Bayne E.H."/>
            <person name="Berlin A.M."/>
            <person name="Desjardins C.A."/>
            <person name="Dobbs E."/>
            <person name="Dukaj L."/>
            <person name="Fan L."/>
            <person name="FitzGerald M.G."/>
            <person name="French C."/>
            <person name="Gujja S."/>
            <person name="Hansen K."/>
            <person name="Keifenheim D."/>
            <person name="Levin J.Z."/>
            <person name="Mosher R.A."/>
            <person name="Mueller C.A."/>
            <person name="Pfiffner J."/>
            <person name="Priest M."/>
            <person name="Russ C."/>
            <person name="Smialowska A."/>
            <person name="Swoboda P."/>
            <person name="Sykes S.M."/>
            <person name="Vaughn M."/>
            <person name="Vengrova S."/>
            <person name="Yoder R."/>
            <person name="Zeng Q."/>
            <person name="Allshire R."/>
            <person name="Baulcombe D."/>
            <person name="Birren B.W."/>
            <person name="Brown W."/>
            <person name="Ekwall K."/>
            <person name="Kellis M."/>
            <person name="Leatherwood J."/>
            <person name="Levin H."/>
            <person name="Margalit H."/>
            <person name="Martienssen R."/>
            <person name="Nieduszynski C.A."/>
            <person name="Spatafora J.W."/>
            <person name="Friedman N."/>
            <person name="Dalgaard J.Z."/>
            <person name="Baumann P."/>
            <person name="Niki H."/>
            <person name="Regev A."/>
            <person name="Nusbaum C."/>
        </authorList>
    </citation>
    <scope>REVISION OF GENE MODEL</scope>
</reference>
<reference key="3">
    <citation type="journal article" date="2006" name="Nat. Biotechnol.">
        <title>ORFeome cloning and global analysis of protein localization in the fission yeast Schizosaccharomyces pombe.</title>
        <authorList>
            <person name="Matsuyama A."/>
            <person name="Arai R."/>
            <person name="Yashiroda Y."/>
            <person name="Shirai A."/>
            <person name="Kamata A."/>
            <person name="Sekido S."/>
            <person name="Kobayashi Y."/>
            <person name="Hashimoto A."/>
            <person name="Hamamoto M."/>
            <person name="Hiraoka Y."/>
            <person name="Horinouchi S."/>
            <person name="Yoshida M."/>
        </authorList>
    </citation>
    <scope>SUBCELLULAR LOCATION [LARGE SCALE ANALYSIS]</scope>
</reference>
<reference key="4">
    <citation type="journal article" date="2008" name="J. Proteome Res.">
        <title>Phosphoproteome analysis of fission yeast.</title>
        <authorList>
            <person name="Wilson-Grady J.T."/>
            <person name="Villen J."/>
            <person name="Gygi S.P."/>
        </authorList>
    </citation>
    <scope>PHOSPHORYLATION [LARGE SCALE ANALYSIS] AT SER-722</scope>
    <scope>IDENTIFICATION BY MASS SPECTROMETRY</scope>
</reference>
<protein>
    <recommendedName>
        <fullName>Uncharacterized WD repeat-containing protein C3H5.08c</fullName>
    </recommendedName>
</protein>
<gene>
    <name type="ORF">SPAC3H5.08c</name>
</gene>
<sequence>MNGNLPHIQIQSPKNSLDHLNNGRQATHNFEHGKPGDREEANGHADAHSSSGRSRYLSSDTNLLRDGSSSLDPLSKHIMKRTRSEKTLSFLNPSRASSNTHLSREGTNRSSNVTRTVSGRKSNHGSSLTDTGESDQLSLKSFGAIRQPSQHRSSLFSRMLGSTSHIFGIREDMDNESSEEERDGIPRVEGNAADPFSWIPDGKNVWDSPPKYIRVLSHNKKEKSLDHLFLAQELYCKPTLAATHDRYYEPRATDFPNLAHESSEPSSSRHTADAQSITNASVHLHNSSSPLNRTPSVISDTLAVAITSNSSSNSSNNAIWAMKFSRDGRYLAVGGQDRILRIWAVLDSEHARSVASETCSSDPNNPKLNLKAPVFSEAPIREYAGHTADILDLSWSRNNFLLSSSMDKTARLWHPVRKDCLCCFEHSDFVTSIAFHPKDDRFFLSGSLDCKLRLWSIKEKAVSFWNELPELITAVAFSPDGGLAIAGTFVGLCLFYDTRGLRFRTQMSIRSSRGKNAKGSKVTGIQTRTQMIDNIAGDTEMLVTTNDSRIRIYNLRDKSLELKFKGHANAQSQNRAYFDDDGNYVICGSEDHQVFIWDLPPQHMHKTKKKKHEHFKASVRPITAAVFAPTKTKQLLTLSGDPVYLAAISARRSSVISNASIETGPSLRNLKSLSHSYLPIEIMKGHIIVCGDLDGRIRVFRQDSVFAARKLIEKKNIERKNSETLSNSSFFPQALKAHMNSISSPKRHFSLRHKKNASQITNNENNGNDDIKKGDEPEEEHVGLRKNSTQEKNANLDPNEALKRADMMMLQEGASSMVYYSLTNLDNPGATVNEAAKTAATIEQNEHEIQTSVDPISNVKAILPNADDVSSKNSSTEDQLECLRCGNSLFNVFSRSFVFEGAKFSIVCSHCNRKLLKSGSDDGSETHEMSTLP</sequence>
<name>YF48_SCHPO</name>
<keyword id="KW-0256">Endoplasmic reticulum</keyword>
<keyword id="KW-0539">Nucleus</keyword>
<keyword id="KW-0597">Phosphoprotein</keyword>
<keyword id="KW-1185">Reference proteome</keyword>
<keyword id="KW-0677">Repeat</keyword>
<keyword id="KW-0853">WD repeat</keyword>
<accession>Q6LA54</accession>